<sequence>MKRKAEKAQAAAPVSAFAARKARQQQAQATAAAVKPPVAEPVVEPPPKRARRSLEEPVVPVAPEENRVQTRRSSRRKEEQAKVEKPTPKARNDQPPKASKKLPEHDTSKATEDQAPSDEESEEPDVVVGNTGVIGLEPIQNEEEGYESPADTAVQVQDFPLSKARLNKNSIVYSDEHRMCVRIKEKMSLVMIGHYDLWVKRGVVSLMGAKLHPSSQVYRVYAPSTHSLPVIKCVSGVNGEAEVEFKSCHSGIYRLKELSPLYQRIWNGKNTTADKLTLKGTPQSTKRTFSVLYTSADDSFKRHLRPLHLEKQWSSAIKSLSQRGGRLKTLICGPKGSGKSTFSRYLLNHLLSPAPQTETKYFNTDGVAFLDLDPGQPEFAPMGQVYLAHLRSPVFGPPFSHPSLDGSRNGTIVRSHHIGATSPKEDPDHYVLAAMDLMDRYRALQASYPQCPLIINYPGWIFGLGLEVATWLVRSLGLSDVVYMSEKGPTEVVQPLGQAAYQAKIPLTILPSQPTDFVSRSSAQLRSMQMQSYFHMSRPNGINNSLWLEQPLSRTKPFRVHYSGPQQGIQGIMVMGTEIHPDLLHEVLDGSIVAVVAVESPNAILGQNSGPMFANNANAETDGDHDVDMQDSADAVPVIGTSTIESSITRTPNEDLPYLFVGAGSSNPLDPKVSHCLGLALVRSVNVASRQLELVTPITGSTLRGVLEQGHSIVLVRGLLDNPNWAISEDYYAARAAEKRHRELIEKLKKDKGAAAAEDATLESEKQVLKDRIRRASKVPWMTVVEDNSRRQREAAQREKSLWKLRKKAYPGSDSEGDW</sequence>
<gene>
    <name type="primary">grc3</name>
    <name type="ORF">An07g06640</name>
</gene>
<name>GRC3_ASPNC</name>
<accession>A2QNQ8</accession>
<feature type="chain" id="PRO_0000289952" description="Polynucleotide 5'-hydroxyl-kinase grc3">
    <location>
        <begin position="1"/>
        <end position="819"/>
    </location>
</feature>
<feature type="region of interest" description="Disordered" evidence="3">
    <location>
        <begin position="1"/>
        <end position="129"/>
    </location>
</feature>
<feature type="compositionally biased region" description="Low complexity" evidence="3">
    <location>
        <begin position="8"/>
        <end position="42"/>
    </location>
</feature>
<feature type="compositionally biased region" description="Basic and acidic residues" evidence="3">
    <location>
        <begin position="76"/>
        <end position="94"/>
    </location>
</feature>
<feature type="compositionally biased region" description="Basic and acidic residues" evidence="3">
    <location>
        <begin position="101"/>
        <end position="112"/>
    </location>
</feature>
<feature type="compositionally biased region" description="Acidic residues" evidence="3">
    <location>
        <begin position="115"/>
        <end position="125"/>
    </location>
</feature>
<feature type="binding site" evidence="2">
    <location>
        <begin position="333"/>
        <end position="340"/>
    </location>
    <ligand>
        <name>ATP</name>
        <dbReference type="ChEBI" id="CHEBI:30616"/>
    </ligand>
</feature>
<proteinExistence type="inferred from homology"/>
<comment type="function">
    <text evidence="1">Polynucleotide 5'-kinase involved in rRNA processing.</text>
</comment>
<comment type="subcellular location">
    <subcellularLocation>
        <location evidence="1">Nucleus</location>
        <location evidence="1">Nucleolus</location>
    </subcellularLocation>
</comment>
<comment type="similarity">
    <text evidence="4">Belongs to the Clp1 family. NOL9/GRC3 subfamily.</text>
</comment>
<comment type="sequence caution" evidence="4">
    <conflict type="frameshift">
        <sequence resource="EMBL-CDS" id="CAK39510"/>
    </conflict>
</comment>
<keyword id="KW-0067">ATP-binding</keyword>
<keyword id="KW-0418">Kinase</keyword>
<keyword id="KW-0547">Nucleotide-binding</keyword>
<keyword id="KW-0539">Nucleus</keyword>
<keyword id="KW-1185">Reference proteome</keyword>
<keyword id="KW-0698">rRNA processing</keyword>
<keyword id="KW-0808">Transferase</keyword>
<organism>
    <name type="scientific">Aspergillus niger (strain ATCC MYA-4892 / CBS 513.88 / FGSC A1513)</name>
    <dbReference type="NCBI Taxonomy" id="425011"/>
    <lineage>
        <taxon>Eukaryota</taxon>
        <taxon>Fungi</taxon>
        <taxon>Dikarya</taxon>
        <taxon>Ascomycota</taxon>
        <taxon>Pezizomycotina</taxon>
        <taxon>Eurotiomycetes</taxon>
        <taxon>Eurotiomycetidae</taxon>
        <taxon>Eurotiales</taxon>
        <taxon>Aspergillaceae</taxon>
        <taxon>Aspergillus</taxon>
        <taxon>Aspergillus subgen. Circumdati</taxon>
    </lineage>
</organism>
<evidence type="ECO:0000250" key="1"/>
<evidence type="ECO:0000255" key="2"/>
<evidence type="ECO:0000256" key="3">
    <source>
        <dbReference type="SAM" id="MobiDB-lite"/>
    </source>
</evidence>
<evidence type="ECO:0000305" key="4"/>
<protein>
    <recommendedName>
        <fullName>Polynucleotide 5'-hydroxyl-kinase grc3</fullName>
        <ecNumber>2.7.1.-</ecNumber>
    </recommendedName>
</protein>
<reference key="1">
    <citation type="journal article" date="2007" name="Nat. Biotechnol.">
        <title>Genome sequencing and analysis of the versatile cell factory Aspergillus niger CBS 513.88.</title>
        <authorList>
            <person name="Pel H.J."/>
            <person name="de Winde J.H."/>
            <person name="Archer D.B."/>
            <person name="Dyer P.S."/>
            <person name="Hofmann G."/>
            <person name="Schaap P.J."/>
            <person name="Turner G."/>
            <person name="de Vries R.P."/>
            <person name="Albang R."/>
            <person name="Albermann K."/>
            <person name="Andersen M.R."/>
            <person name="Bendtsen J.D."/>
            <person name="Benen J.A.E."/>
            <person name="van den Berg M."/>
            <person name="Breestraat S."/>
            <person name="Caddick M.X."/>
            <person name="Contreras R."/>
            <person name="Cornell M."/>
            <person name="Coutinho P.M."/>
            <person name="Danchin E.G.J."/>
            <person name="Debets A.J.M."/>
            <person name="Dekker P."/>
            <person name="van Dijck P.W.M."/>
            <person name="van Dijk A."/>
            <person name="Dijkhuizen L."/>
            <person name="Driessen A.J.M."/>
            <person name="d'Enfert C."/>
            <person name="Geysens S."/>
            <person name="Goosen C."/>
            <person name="Groot G.S.P."/>
            <person name="de Groot P.W.J."/>
            <person name="Guillemette T."/>
            <person name="Henrissat B."/>
            <person name="Herweijer M."/>
            <person name="van den Hombergh J.P.T.W."/>
            <person name="van den Hondel C.A.M.J.J."/>
            <person name="van der Heijden R.T.J.M."/>
            <person name="van der Kaaij R.M."/>
            <person name="Klis F.M."/>
            <person name="Kools H.J."/>
            <person name="Kubicek C.P."/>
            <person name="van Kuyk P.A."/>
            <person name="Lauber J."/>
            <person name="Lu X."/>
            <person name="van der Maarel M.J.E.C."/>
            <person name="Meulenberg R."/>
            <person name="Menke H."/>
            <person name="Mortimer M.A."/>
            <person name="Nielsen J."/>
            <person name="Oliver S.G."/>
            <person name="Olsthoorn M."/>
            <person name="Pal K."/>
            <person name="van Peij N.N.M.E."/>
            <person name="Ram A.F.J."/>
            <person name="Rinas U."/>
            <person name="Roubos J.A."/>
            <person name="Sagt C.M.J."/>
            <person name="Schmoll M."/>
            <person name="Sun J."/>
            <person name="Ussery D."/>
            <person name="Varga J."/>
            <person name="Vervecken W."/>
            <person name="van de Vondervoort P.J.J."/>
            <person name="Wedler H."/>
            <person name="Woesten H.A.B."/>
            <person name="Zeng A.-P."/>
            <person name="van Ooyen A.J.J."/>
            <person name="Visser J."/>
            <person name="Stam H."/>
        </authorList>
    </citation>
    <scope>NUCLEOTIDE SEQUENCE [LARGE SCALE GENOMIC DNA]</scope>
    <source>
        <strain>ATCC MYA-4892 / CBS 513.88 / FGSC A1513</strain>
    </source>
</reference>
<dbReference type="EC" id="2.7.1.-"/>
<dbReference type="EMBL" id="AM270135">
    <property type="protein sequence ID" value="CAK39510.1"/>
    <property type="status" value="ALT_FRAME"/>
    <property type="molecule type" value="Genomic_DNA"/>
</dbReference>
<dbReference type="RefSeq" id="XP_001391742.1">
    <property type="nucleotide sequence ID" value="XM_001391705.1"/>
</dbReference>
<dbReference type="SMR" id="A2QNQ8"/>
<dbReference type="EnsemblFungi" id="CAK39510">
    <property type="protein sequence ID" value="CAK39510"/>
    <property type="gene ID" value="An07g06640"/>
</dbReference>
<dbReference type="GeneID" id="4981932"/>
<dbReference type="KEGG" id="ang:An07g06640"/>
<dbReference type="Proteomes" id="UP000006706">
    <property type="component" value="Chromosome 4L"/>
</dbReference>
<dbReference type="GO" id="GO:0005730">
    <property type="term" value="C:nucleolus"/>
    <property type="evidence" value="ECO:0007669"/>
    <property type="project" value="UniProtKB-SubCell"/>
</dbReference>
<dbReference type="GO" id="GO:0005524">
    <property type="term" value="F:ATP binding"/>
    <property type="evidence" value="ECO:0007669"/>
    <property type="project" value="UniProtKB-KW"/>
</dbReference>
<dbReference type="GO" id="GO:0051731">
    <property type="term" value="F:polynucleotide 5'-hydroxyl-kinase activity"/>
    <property type="evidence" value="ECO:0000250"/>
    <property type="project" value="UniProtKB"/>
</dbReference>
<dbReference type="GO" id="GO:0000448">
    <property type="term" value="P:cleavage in ITS2 between 5.8S rRNA and LSU-rRNA of tricistronic rRNA transcript (SSU-rRNA, 5.8S rRNA, LSU-rRNA)"/>
    <property type="evidence" value="ECO:0007669"/>
    <property type="project" value="TreeGrafter"/>
</dbReference>
<dbReference type="GO" id="GO:0006364">
    <property type="term" value="P:rRNA processing"/>
    <property type="evidence" value="ECO:0000250"/>
    <property type="project" value="UniProtKB"/>
</dbReference>
<dbReference type="FunFam" id="3.40.50.300:FF:001156">
    <property type="entry name" value="Polynucleotide 5-hydroxyl-kinase grc3"/>
    <property type="match status" value="1"/>
</dbReference>
<dbReference type="Gene3D" id="3.40.50.300">
    <property type="entry name" value="P-loop containing nucleotide triphosphate hydrolases"/>
    <property type="match status" value="1"/>
</dbReference>
<dbReference type="InterPro" id="IPR045116">
    <property type="entry name" value="Clp1/Grc3"/>
</dbReference>
<dbReference type="InterPro" id="IPR032319">
    <property type="entry name" value="CLP1_P"/>
</dbReference>
<dbReference type="InterPro" id="IPR027417">
    <property type="entry name" value="P-loop_NTPase"/>
</dbReference>
<dbReference type="PANTHER" id="PTHR12755">
    <property type="entry name" value="CLEAVAGE/POLYADENYLATION FACTOR IA SUBUNIT CLP1P"/>
    <property type="match status" value="1"/>
</dbReference>
<dbReference type="PANTHER" id="PTHR12755:SF3">
    <property type="entry name" value="POLYNUCLEOTIDE 5'-HYDROXYL-KINASE NOL9"/>
    <property type="match status" value="1"/>
</dbReference>
<dbReference type="Pfam" id="PF16575">
    <property type="entry name" value="CLP1_P"/>
    <property type="match status" value="1"/>
</dbReference>
<dbReference type="SUPFAM" id="SSF52540">
    <property type="entry name" value="P-loop containing nucleoside triphosphate hydrolases"/>
    <property type="match status" value="1"/>
</dbReference>